<sequence length="239" mass="26738">MNKINLEDKIILAIDGLNIQEAKLFLERCPNIKWVKVGLELFTREGPNVIKFLKDLNKKIFLDLKFHDIPNTMEAACYEVSKLGVDIISVHASSGYKALTSSKNASLDGANLASVNPPNIVGITVLTSFSSEEFRNDLDRKNSIEENVVRLAKLCFDAGLDGCVCSPWEAKRLRSIYKNNFELITPGIRTKTQNKDDQNRIMTPYEALKNGASRLVIGRAISKAKDPNKVFLDICNSIY</sequence>
<feature type="chain" id="PRO_1000065929" description="Orotidine 5'-phosphate decarboxylase">
    <location>
        <begin position="1"/>
        <end position="239"/>
    </location>
</feature>
<feature type="active site" description="Proton donor" evidence="1">
    <location>
        <position position="65"/>
    </location>
</feature>
<feature type="binding site" evidence="1">
    <location>
        <position position="15"/>
    </location>
    <ligand>
        <name>substrate</name>
    </ligand>
</feature>
<feature type="binding site" evidence="1">
    <location>
        <position position="36"/>
    </location>
    <ligand>
        <name>substrate</name>
    </ligand>
</feature>
<feature type="binding site" evidence="1">
    <location>
        <begin position="63"/>
        <end position="72"/>
    </location>
    <ligand>
        <name>substrate</name>
    </ligand>
</feature>
<feature type="binding site" evidence="1">
    <location>
        <position position="127"/>
    </location>
    <ligand>
        <name>substrate</name>
    </ligand>
</feature>
<feature type="binding site" evidence="1">
    <location>
        <position position="189"/>
    </location>
    <ligand>
        <name>substrate</name>
    </ligand>
</feature>
<feature type="binding site" evidence="1">
    <location>
        <position position="198"/>
    </location>
    <ligand>
        <name>substrate</name>
    </ligand>
</feature>
<feature type="binding site" evidence="1">
    <location>
        <position position="218"/>
    </location>
    <ligand>
        <name>substrate</name>
    </ligand>
</feature>
<feature type="binding site" evidence="1">
    <location>
        <position position="219"/>
    </location>
    <ligand>
        <name>substrate</name>
    </ligand>
</feature>
<dbReference type="EC" id="4.1.1.23" evidence="1"/>
<dbReference type="EMBL" id="CP000552">
    <property type="protein sequence ID" value="ABM72696.1"/>
    <property type="molecule type" value="Genomic_DNA"/>
</dbReference>
<dbReference type="RefSeq" id="WP_011820792.1">
    <property type="nucleotide sequence ID" value="NC_008817.1"/>
</dbReference>
<dbReference type="SMR" id="A2BY35"/>
<dbReference type="STRING" id="167542.P9515_14891"/>
<dbReference type="GeneID" id="60202145"/>
<dbReference type="KEGG" id="pmc:P9515_14891"/>
<dbReference type="eggNOG" id="COG0284">
    <property type="taxonomic scope" value="Bacteria"/>
</dbReference>
<dbReference type="HOGENOM" id="CLU_067069_1_0_3"/>
<dbReference type="OrthoDB" id="9806203at2"/>
<dbReference type="UniPathway" id="UPA00070">
    <property type="reaction ID" value="UER00120"/>
</dbReference>
<dbReference type="Proteomes" id="UP000001589">
    <property type="component" value="Chromosome"/>
</dbReference>
<dbReference type="GO" id="GO:0005829">
    <property type="term" value="C:cytosol"/>
    <property type="evidence" value="ECO:0007669"/>
    <property type="project" value="TreeGrafter"/>
</dbReference>
<dbReference type="GO" id="GO:0004590">
    <property type="term" value="F:orotidine-5'-phosphate decarboxylase activity"/>
    <property type="evidence" value="ECO:0007669"/>
    <property type="project" value="UniProtKB-UniRule"/>
</dbReference>
<dbReference type="GO" id="GO:0006207">
    <property type="term" value="P:'de novo' pyrimidine nucleobase biosynthetic process"/>
    <property type="evidence" value="ECO:0007669"/>
    <property type="project" value="InterPro"/>
</dbReference>
<dbReference type="GO" id="GO:0044205">
    <property type="term" value="P:'de novo' UMP biosynthetic process"/>
    <property type="evidence" value="ECO:0007669"/>
    <property type="project" value="UniProtKB-UniRule"/>
</dbReference>
<dbReference type="CDD" id="cd04725">
    <property type="entry name" value="OMP_decarboxylase_like"/>
    <property type="match status" value="1"/>
</dbReference>
<dbReference type="Gene3D" id="3.20.20.70">
    <property type="entry name" value="Aldolase class I"/>
    <property type="match status" value="1"/>
</dbReference>
<dbReference type="HAMAP" id="MF_01200_B">
    <property type="entry name" value="OMPdecase_type1_B"/>
    <property type="match status" value="1"/>
</dbReference>
<dbReference type="InterPro" id="IPR013785">
    <property type="entry name" value="Aldolase_TIM"/>
</dbReference>
<dbReference type="InterPro" id="IPR014732">
    <property type="entry name" value="OMPdecase"/>
</dbReference>
<dbReference type="InterPro" id="IPR018089">
    <property type="entry name" value="OMPdecase_AS"/>
</dbReference>
<dbReference type="InterPro" id="IPR047596">
    <property type="entry name" value="OMPdecase_bac"/>
</dbReference>
<dbReference type="InterPro" id="IPR001754">
    <property type="entry name" value="OMPdeCOase_dom"/>
</dbReference>
<dbReference type="InterPro" id="IPR011060">
    <property type="entry name" value="RibuloseP-bd_barrel"/>
</dbReference>
<dbReference type="NCBIfam" id="NF001273">
    <property type="entry name" value="PRK00230.1"/>
    <property type="match status" value="1"/>
</dbReference>
<dbReference type="NCBIfam" id="TIGR01740">
    <property type="entry name" value="pyrF"/>
    <property type="match status" value="1"/>
</dbReference>
<dbReference type="PANTHER" id="PTHR32119">
    <property type="entry name" value="OROTIDINE 5'-PHOSPHATE DECARBOXYLASE"/>
    <property type="match status" value="1"/>
</dbReference>
<dbReference type="PANTHER" id="PTHR32119:SF2">
    <property type="entry name" value="OROTIDINE 5'-PHOSPHATE DECARBOXYLASE"/>
    <property type="match status" value="1"/>
</dbReference>
<dbReference type="Pfam" id="PF00215">
    <property type="entry name" value="OMPdecase"/>
    <property type="match status" value="1"/>
</dbReference>
<dbReference type="SMART" id="SM00934">
    <property type="entry name" value="OMPdecase"/>
    <property type="match status" value="1"/>
</dbReference>
<dbReference type="SUPFAM" id="SSF51366">
    <property type="entry name" value="Ribulose-phoshate binding barrel"/>
    <property type="match status" value="1"/>
</dbReference>
<dbReference type="PROSITE" id="PS00156">
    <property type="entry name" value="OMPDECASE"/>
    <property type="match status" value="1"/>
</dbReference>
<name>PYRF_PROM5</name>
<gene>
    <name evidence="1" type="primary">pyrF</name>
    <name type="ordered locus">P9515_14891</name>
</gene>
<evidence type="ECO:0000255" key="1">
    <source>
        <dbReference type="HAMAP-Rule" id="MF_01200"/>
    </source>
</evidence>
<protein>
    <recommendedName>
        <fullName evidence="1">Orotidine 5'-phosphate decarboxylase</fullName>
        <ecNumber evidence="1">4.1.1.23</ecNumber>
    </recommendedName>
    <alternativeName>
        <fullName evidence="1">OMP decarboxylase</fullName>
        <shortName evidence="1">OMPDCase</shortName>
        <shortName evidence="1">OMPdecase</shortName>
    </alternativeName>
</protein>
<keyword id="KW-0210">Decarboxylase</keyword>
<keyword id="KW-0456">Lyase</keyword>
<keyword id="KW-0665">Pyrimidine biosynthesis</keyword>
<accession>A2BY35</accession>
<proteinExistence type="inferred from homology"/>
<reference key="1">
    <citation type="journal article" date="2007" name="PLoS Genet.">
        <title>Patterns and implications of gene gain and loss in the evolution of Prochlorococcus.</title>
        <authorList>
            <person name="Kettler G.C."/>
            <person name="Martiny A.C."/>
            <person name="Huang K."/>
            <person name="Zucker J."/>
            <person name="Coleman M.L."/>
            <person name="Rodrigue S."/>
            <person name="Chen F."/>
            <person name="Lapidus A."/>
            <person name="Ferriera S."/>
            <person name="Johnson J."/>
            <person name="Steglich C."/>
            <person name="Church G.M."/>
            <person name="Richardson P."/>
            <person name="Chisholm S.W."/>
        </authorList>
    </citation>
    <scope>NUCLEOTIDE SEQUENCE [LARGE SCALE GENOMIC DNA]</scope>
    <source>
        <strain>MIT 9515</strain>
    </source>
</reference>
<comment type="function">
    <text evidence="1">Catalyzes the decarboxylation of orotidine 5'-monophosphate (OMP) to uridine 5'-monophosphate (UMP).</text>
</comment>
<comment type="catalytic activity">
    <reaction evidence="1">
        <text>orotidine 5'-phosphate + H(+) = UMP + CO2</text>
        <dbReference type="Rhea" id="RHEA:11596"/>
        <dbReference type="ChEBI" id="CHEBI:15378"/>
        <dbReference type="ChEBI" id="CHEBI:16526"/>
        <dbReference type="ChEBI" id="CHEBI:57538"/>
        <dbReference type="ChEBI" id="CHEBI:57865"/>
        <dbReference type="EC" id="4.1.1.23"/>
    </reaction>
</comment>
<comment type="pathway">
    <text evidence="1">Pyrimidine metabolism; UMP biosynthesis via de novo pathway; UMP from orotate: step 2/2.</text>
</comment>
<comment type="subunit">
    <text evidence="1">Homodimer.</text>
</comment>
<comment type="similarity">
    <text evidence="1">Belongs to the OMP decarboxylase family. Type 1 subfamily.</text>
</comment>
<organism>
    <name type="scientific">Prochlorococcus marinus (strain MIT 9515)</name>
    <dbReference type="NCBI Taxonomy" id="167542"/>
    <lineage>
        <taxon>Bacteria</taxon>
        <taxon>Bacillati</taxon>
        <taxon>Cyanobacteriota</taxon>
        <taxon>Cyanophyceae</taxon>
        <taxon>Synechococcales</taxon>
        <taxon>Prochlorococcaceae</taxon>
        <taxon>Prochlorococcus</taxon>
    </lineage>
</organism>